<protein>
    <recommendedName>
        <fullName evidence="8">Large ribosomal subunit protein eL36</fullName>
    </recommendedName>
    <alternativeName>
        <fullName>60S ribosomal protein L36</fullName>
    </alternativeName>
</protein>
<keyword id="KW-0002">3D-structure</keyword>
<keyword id="KW-0007">Acetylation</keyword>
<keyword id="KW-0963">Cytoplasm</keyword>
<keyword id="KW-0903">Direct protein sequencing</keyword>
<keyword id="KW-1267">Proteomics identification</keyword>
<keyword id="KW-1185">Reference proteome</keyword>
<keyword id="KW-0687">Ribonucleoprotein</keyword>
<keyword id="KW-0689">Ribosomal protein</keyword>
<proteinExistence type="evidence at protein level"/>
<reference key="1">
    <citation type="journal article" date="2002" name="Genome Res.">
        <title>The human ribosomal protein genes: sequencing and comparative analysis of 73 genes.</title>
        <authorList>
            <person name="Yoshihama M."/>
            <person name="Uechi T."/>
            <person name="Asakawa S."/>
            <person name="Kawasaki K."/>
            <person name="Kato S."/>
            <person name="Higa S."/>
            <person name="Maeda N."/>
            <person name="Minoshima S."/>
            <person name="Tanaka T."/>
            <person name="Shimizu N."/>
            <person name="Kenmochi N."/>
        </authorList>
    </citation>
    <scope>NUCLEOTIDE SEQUENCE [GENOMIC DNA]</scope>
</reference>
<reference key="2">
    <citation type="journal article" date="2001" name="Genome Res.">
        <title>Towards a catalog of human genes and proteins: sequencing and analysis of 500 novel complete protein coding human cDNAs.</title>
        <authorList>
            <person name="Wiemann S."/>
            <person name="Weil B."/>
            <person name="Wellenreuther R."/>
            <person name="Gassenhuber J."/>
            <person name="Glassl S."/>
            <person name="Ansorge W."/>
            <person name="Boecher M."/>
            <person name="Bloecker H."/>
            <person name="Bauersachs S."/>
            <person name="Blum H."/>
            <person name="Lauber J."/>
            <person name="Duesterhoeft A."/>
            <person name="Beyer A."/>
            <person name="Koehrer K."/>
            <person name="Strack N."/>
            <person name="Mewes H.-W."/>
            <person name="Ottenwaelder B."/>
            <person name="Obermaier B."/>
            <person name="Tampe J."/>
            <person name="Heubner D."/>
            <person name="Wambutt R."/>
            <person name="Korn B."/>
            <person name="Klein M."/>
            <person name="Poustka A."/>
        </authorList>
    </citation>
    <scope>NUCLEOTIDE SEQUENCE [LARGE SCALE MRNA]</scope>
    <source>
        <tissue>Kidney</tissue>
    </source>
</reference>
<reference key="3">
    <citation type="journal article" date="2000" name="Genome Res.">
        <title>Cloning and functional analysis of cDNAs with open reading frames for 300 previously undefined genes expressed in CD34+ hematopoietic stem/progenitor cells.</title>
        <authorList>
            <person name="Zhang Q.-H."/>
            <person name="Ye M."/>
            <person name="Wu X.-Y."/>
            <person name="Ren S.-X."/>
            <person name="Zhao M."/>
            <person name="Zhao C.-J."/>
            <person name="Fu G."/>
            <person name="Shen Y."/>
            <person name="Fan H.-Y."/>
            <person name="Lu G."/>
            <person name="Zhong M."/>
            <person name="Xu X.-R."/>
            <person name="Han Z.-G."/>
            <person name="Zhang J.-W."/>
            <person name="Tao J."/>
            <person name="Huang Q.-H."/>
            <person name="Zhou J."/>
            <person name="Hu G.-X."/>
            <person name="Gu J."/>
            <person name="Chen S.-J."/>
            <person name="Chen Z."/>
        </authorList>
    </citation>
    <scope>NUCLEOTIDE SEQUENCE [LARGE SCALE MRNA]</scope>
    <source>
        <tissue>Umbilical cord blood</tissue>
    </source>
</reference>
<reference key="4">
    <citation type="submission" date="2004-06" db="EMBL/GenBank/DDBJ databases">
        <title>Cloning of human full open reading frames in Gateway(TM) system entry vector (pDONR201).</title>
        <authorList>
            <person name="Ebert L."/>
            <person name="Schick M."/>
            <person name="Neubert P."/>
            <person name="Schatten R."/>
            <person name="Henze S."/>
            <person name="Korn B."/>
        </authorList>
    </citation>
    <scope>NUCLEOTIDE SEQUENCE [LARGE SCALE MRNA]</scope>
</reference>
<reference key="5">
    <citation type="journal article" date="2004" name="Nat. Genet.">
        <title>Complete sequencing and characterization of 21,243 full-length human cDNAs.</title>
        <authorList>
            <person name="Ota T."/>
            <person name="Suzuki Y."/>
            <person name="Nishikawa T."/>
            <person name="Otsuki T."/>
            <person name="Sugiyama T."/>
            <person name="Irie R."/>
            <person name="Wakamatsu A."/>
            <person name="Hayashi K."/>
            <person name="Sato H."/>
            <person name="Nagai K."/>
            <person name="Kimura K."/>
            <person name="Makita H."/>
            <person name="Sekine M."/>
            <person name="Obayashi M."/>
            <person name="Nishi T."/>
            <person name="Shibahara T."/>
            <person name="Tanaka T."/>
            <person name="Ishii S."/>
            <person name="Yamamoto J."/>
            <person name="Saito K."/>
            <person name="Kawai Y."/>
            <person name="Isono Y."/>
            <person name="Nakamura Y."/>
            <person name="Nagahari K."/>
            <person name="Murakami K."/>
            <person name="Yasuda T."/>
            <person name="Iwayanagi T."/>
            <person name="Wagatsuma M."/>
            <person name="Shiratori A."/>
            <person name="Sudo H."/>
            <person name="Hosoiri T."/>
            <person name="Kaku Y."/>
            <person name="Kodaira H."/>
            <person name="Kondo H."/>
            <person name="Sugawara M."/>
            <person name="Takahashi M."/>
            <person name="Kanda K."/>
            <person name="Yokoi T."/>
            <person name="Furuya T."/>
            <person name="Kikkawa E."/>
            <person name="Omura Y."/>
            <person name="Abe K."/>
            <person name="Kamihara K."/>
            <person name="Katsuta N."/>
            <person name="Sato K."/>
            <person name="Tanikawa M."/>
            <person name="Yamazaki M."/>
            <person name="Ninomiya K."/>
            <person name="Ishibashi T."/>
            <person name="Yamashita H."/>
            <person name="Murakawa K."/>
            <person name="Fujimori K."/>
            <person name="Tanai H."/>
            <person name="Kimata M."/>
            <person name="Watanabe M."/>
            <person name="Hiraoka S."/>
            <person name="Chiba Y."/>
            <person name="Ishida S."/>
            <person name="Ono Y."/>
            <person name="Takiguchi S."/>
            <person name="Watanabe S."/>
            <person name="Yosida M."/>
            <person name="Hotuta T."/>
            <person name="Kusano J."/>
            <person name="Kanehori K."/>
            <person name="Takahashi-Fujii A."/>
            <person name="Hara H."/>
            <person name="Tanase T.-O."/>
            <person name="Nomura Y."/>
            <person name="Togiya S."/>
            <person name="Komai F."/>
            <person name="Hara R."/>
            <person name="Takeuchi K."/>
            <person name="Arita M."/>
            <person name="Imose N."/>
            <person name="Musashino K."/>
            <person name="Yuuki H."/>
            <person name="Oshima A."/>
            <person name="Sasaki N."/>
            <person name="Aotsuka S."/>
            <person name="Yoshikawa Y."/>
            <person name="Matsunawa H."/>
            <person name="Ichihara T."/>
            <person name="Shiohata N."/>
            <person name="Sano S."/>
            <person name="Moriya S."/>
            <person name="Momiyama H."/>
            <person name="Satoh N."/>
            <person name="Takami S."/>
            <person name="Terashima Y."/>
            <person name="Suzuki O."/>
            <person name="Nakagawa S."/>
            <person name="Senoh A."/>
            <person name="Mizoguchi H."/>
            <person name="Goto Y."/>
            <person name="Shimizu F."/>
            <person name="Wakebe H."/>
            <person name="Hishigaki H."/>
            <person name="Watanabe T."/>
            <person name="Sugiyama A."/>
            <person name="Takemoto M."/>
            <person name="Kawakami B."/>
            <person name="Yamazaki M."/>
            <person name="Watanabe K."/>
            <person name="Kumagai A."/>
            <person name="Itakura S."/>
            <person name="Fukuzumi Y."/>
            <person name="Fujimori Y."/>
            <person name="Komiyama M."/>
            <person name="Tashiro H."/>
            <person name="Tanigami A."/>
            <person name="Fujiwara T."/>
            <person name="Ono T."/>
            <person name="Yamada K."/>
            <person name="Fujii Y."/>
            <person name="Ozaki K."/>
            <person name="Hirao M."/>
            <person name="Ohmori Y."/>
            <person name="Kawabata A."/>
            <person name="Hikiji T."/>
            <person name="Kobatake N."/>
            <person name="Inagaki H."/>
            <person name="Ikema Y."/>
            <person name="Okamoto S."/>
            <person name="Okitani R."/>
            <person name="Kawakami T."/>
            <person name="Noguchi S."/>
            <person name="Itoh T."/>
            <person name="Shigeta K."/>
            <person name="Senba T."/>
            <person name="Matsumura K."/>
            <person name="Nakajima Y."/>
            <person name="Mizuno T."/>
            <person name="Morinaga M."/>
            <person name="Sasaki M."/>
            <person name="Togashi T."/>
            <person name="Oyama M."/>
            <person name="Hata H."/>
            <person name="Watanabe M."/>
            <person name="Komatsu T."/>
            <person name="Mizushima-Sugano J."/>
            <person name="Satoh T."/>
            <person name="Shirai Y."/>
            <person name="Takahashi Y."/>
            <person name="Nakagawa K."/>
            <person name="Okumura K."/>
            <person name="Nagase T."/>
            <person name="Nomura N."/>
            <person name="Kikuchi H."/>
            <person name="Masuho Y."/>
            <person name="Yamashita R."/>
            <person name="Nakai K."/>
            <person name="Yada T."/>
            <person name="Nakamura Y."/>
            <person name="Ohara O."/>
            <person name="Isogai T."/>
            <person name="Sugano S."/>
        </authorList>
    </citation>
    <scope>NUCLEOTIDE SEQUENCE [LARGE SCALE MRNA]</scope>
    <source>
        <tissue>Thymus</tissue>
    </source>
</reference>
<reference key="6">
    <citation type="submission" date="2005-09" db="EMBL/GenBank/DDBJ databases">
        <authorList>
            <person name="Mural R.J."/>
            <person name="Istrail S."/>
            <person name="Sutton G.G."/>
            <person name="Florea L."/>
            <person name="Halpern A.L."/>
            <person name="Mobarry C.M."/>
            <person name="Lippert R."/>
            <person name="Walenz B."/>
            <person name="Shatkay H."/>
            <person name="Dew I."/>
            <person name="Miller J.R."/>
            <person name="Flanigan M.J."/>
            <person name="Edwards N.J."/>
            <person name="Bolanos R."/>
            <person name="Fasulo D."/>
            <person name="Halldorsson B.V."/>
            <person name="Hannenhalli S."/>
            <person name="Turner R."/>
            <person name="Yooseph S."/>
            <person name="Lu F."/>
            <person name="Nusskern D.R."/>
            <person name="Shue B.C."/>
            <person name="Zheng X.H."/>
            <person name="Zhong F."/>
            <person name="Delcher A.L."/>
            <person name="Huson D.H."/>
            <person name="Kravitz S.A."/>
            <person name="Mouchard L."/>
            <person name="Reinert K."/>
            <person name="Remington K.A."/>
            <person name="Clark A.G."/>
            <person name="Waterman M.S."/>
            <person name="Eichler E.E."/>
            <person name="Adams M.D."/>
            <person name="Hunkapiller M.W."/>
            <person name="Myers E.W."/>
            <person name="Venter J.C."/>
        </authorList>
    </citation>
    <scope>NUCLEOTIDE SEQUENCE [LARGE SCALE GENOMIC DNA]</scope>
</reference>
<reference key="7">
    <citation type="journal article" date="2004" name="Genome Res.">
        <title>The status, quality, and expansion of the NIH full-length cDNA project: the Mammalian Gene Collection (MGC).</title>
        <authorList>
            <consortium name="The MGC Project Team"/>
        </authorList>
    </citation>
    <scope>NUCLEOTIDE SEQUENCE [LARGE SCALE MRNA]</scope>
    <source>
        <tissue>Blood</tissue>
        <tissue>Kidney</tissue>
        <tissue>Skin</tissue>
    </source>
</reference>
<reference key="8">
    <citation type="journal article" date="2003" name="J. Protein Chem.">
        <title>Characterization and analysis of posttranslational modifications of the human large cytoplasmic ribosomal subunit proteins by mass spectrometry and Edman sequencing.</title>
        <authorList>
            <person name="Odintsova T.I."/>
            <person name="Muller E.C."/>
            <person name="Ivanov A.V."/>
            <person name="Egorov T.A."/>
            <person name="Bienert R."/>
            <person name="Vladimirov S.N."/>
            <person name="Kostka S."/>
            <person name="Otto A."/>
            <person name="Wittmann-Liebold B."/>
            <person name="Karpova G.G."/>
        </authorList>
    </citation>
    <scope>PROTEIN SEQUENCE OF 2-10</scope>
    <scope>IDENTIFICATION BY MASS SPECTROMETRY</scope>
    <scope>FUNCTION</scope>
    <scope>SUBUNIT</scope>
</reference>
<reference key="9">
    <citation type="submission" date="2008-03" db="UniProtKB">
        <authorList>
            <person name="Bienvenut W.V."/>
            <person name="Vousden K.H."/>
            <person name="Lukashchuk N."/>
        </authorList>
    </citation>
    <scope>PROTEIN SEQUENCE OF 2-13; 46-55 AND 88-98</scope>
    <scope>CLEAVAGE OF INITIATOR METHIONINE</scope>
    <scope>IDENTIFICATION BY MASS SPECTROMETRY</scope>
    <source>
        <tissue>Lung carcinoma</tissue>
    </source>
</reference>
<reference key="10">
    <citation type="journal article" date="2003" name="Nature">
        <title>Proteomic characterization of the human centrosome by protein correlation profiling.</title>
        <authorList>
            <person name="Andersen J.S."/>
            <person name="Wilkinson C.J."/>
            <person name="Mayor T."/>
            <person name="Mortensen P."/>
            <person name="Nigg E.A."/>
            <person name="Mann M."/>
        </authorList>
    </citation>
    <scope>IDENTIFICATION BY MASS SPECTROMETRY</scope>
    <source>
        <tissue>Lymphoblast</tissue>
    </source>
</reference>
<reference key="11">
    <citation type="journal article" date="2009" name="Science">
        <title>Lysine acetylation targets protein complexes and co-regulates major cellular functions.</title>
        <authorList>
            <person name="Choudhary C."/>
            <person name="Kumar C."/>
            <person name="Gnad F."/>
            <person name="Nielsen M.L."/>
            <person name="Rehman M."/>
            <person name="Walther T.C."/>
            <person name="Olsen J.V."/>
            <person name="Mann M."/>
        </authorList>
    </citation>
    <scope>ACETYLATION [LARGE SCALE ANALYSIS] AT LYS-62</scope>
    <scope>IDENTIFICATION BY MASS SPECTROMETRY [LARGE SCALE ANALYSIS]</scope>
</reference>
<reference key="12">
    <citation type="journal article" date="2011" name="BMC Syst. Biol.">
        <title>Initial characterization of the human central proteome.</title>
        <authorList>
            <person name="Burkard T.R."/>
            <person name="Planyavsky M."/>
            <person name="Kaupe I."/>
            <person name="Breitwieser F.P."/>
            <person name="Buerckstuemmer T."/>
            <person name="Bennett K.L."/>
            <person name="Superti-Furga G."/>
            <person name="Colinge J."/>
        </authorList>
    </citation>
    <scope>IDENTIFICATION BY MASS SPECTROMETRY [LARGE SCALE ANALYSIS]</scope>
</reference>
<reference key="13">
    <citation type="journal article" date="2014" name="Curr. Opin. Struct. Biol.">
        <title>A new system for naming ribosomal proteins.</title>
        <authorList>
            <person name="Ban N."/>
            <person name="Beckmann R."/>
            <person name="Cate J.H.D."/>
            <person name="Dinman J.D."/>
            <person name="Dragon F."/>
            <person name="Ellis S.R."/>
            <person name="Lafontaine D.L.J."/>
            <person name="Lindahl L."/>
            <person name="Liljas A."/>
            <person name="Lipton J.M."/>
            <person name="McAlear M.A."/>
            <person name="Moore P.B."/>
            <person name="Noller H.F."/>
            <person name="Ortega J."/>
            <person name="Panse V.G."/>
            <person name="Ramakrishnan V."/>
            <person name="Spahn C.M.T."/>
            <person name="Steitz T.A."/>
            <person name="Tchorzewski M."/>
            <person name="Tollervey D."/>
            <person name="Warren A.J."/>
            <person name="Williamson J.R."/>
            <person name="Wilson D."/>
            <person name="Yonath A."/>
            <person name="Yusupov M."/>
        </authorList>
    </citation>
    <scope>NOMENCLATURE</scope>
</reference>
<reference key="14">
    <citation type="journal article" date="2015" name="Proteomics">
        <title>N-terminome analysis of the human mitochondrial proteome.</title>
        <authorList>
            <person name="Vaca Jacome A.S."/>
            <person name="Rabilloud T."/>
            <person name="Schaeffer-Reiss C."/>
            <person name="Rompais M."/>
            <person name="Ayoub D."/>
            <person name="Lane L."/>
            <person name="Bairoch A."/>
            <person name="Van Dorsselaer A."/>
            <person name="Carapito C."/>
        </authorList>
    </citation>
    <scope>IDENTIFICATION BY MASS SPECTROMETRY [LARGE SCALE ANALYSIS]</scope>
</reference>
<reference key="15">
    <citation type="journal article" date="2013" name="Nature">
        <title>Structures of the human and Drosophila 80S ribosome.</title>
        <authorList>
            <person name="Anger A.M."/>
            <person name="Armache J.P."/>
            <person name="Berninghausen O."/>
            <person name="Habeck M."/>
            <person name="Subklewe M."/>
            <person name="Wilson D.N."/>
            <person name="Beckmann R."/>
        </authorList>
    </citation>
    <scope>STRUCTURE BY ELECTRON MICROSCOPY (5.0 ANGSTROMS)</scope>
    <scope>SUBCELLULAR LOCATION</scope>
    <scope>SUBUNIT</scope>
    <scope>FUNCTION</scope>
</reference>
<reference evidence="14" key="16">
    <citation type="journal article" date="2015" name="Cell">
        <title>Structural snapshots of actively translating human ribosomes.</title>
        <authorList>
            <person name="Behrmann E."/>
            <person name="Loerke J."/>
            <person name="Budkevich T.V."/>
            <person name="Yamamoto K."/>
            <person name="Schmidt A."/>
            <person name="Penczek P.A."/>
            <person name="Vos M.R."/>
            <person name="Burger J."/>
            <person name="Mielke T."/>
            <person name="Scheerer P."/>
            <person name="Spahn C.M."/>
        </authorList>
    </citation>
    <scope>STRUCTURE BY ELECTRON MICROSCOPY (3.50 ANGSTROMS)</scope>
    <scope>SUBCELLULAR LOCATION</scope>
    <scope>SUBUNIT</scope>
    <scope>FUNCTION</scope>
</reference>
<reference evidence="13" key="17">
    <citation type="journal article" date="2015" name="Nature">
        <title>Structure of the human 80S ribosome.</title>
        <authorList>
            <person name="Khatter H."/>
            <person name="Myasnikov A.G."/>
            <person name="Natchiar S.K."/>
            <person name="Klaholz B.P."/>
        </authorList>
    </citation>
    <scope>STRUCTURE BY ELECTRON MICROSCOPY (3.60 ANGSTROMS)</scope>
    <scope>SUBCELLULAR LOCATION</scope>
    <scope>SUBUNIT</scope>
    <scope>FUNCTION</scope>
</reference>
<reference evidence="15 16 17 18" key="18">
    <citation type="journal article" date="2020" name="Nat. Commun.">
        <title>Structural snapshots of human pre-60S ribosomal particles before and after nuclear export.</title>
        <authorList>
            <person name="Liang X."/>
            <person name="Zuo M.Q."/>
            <person name="Zhang Y."/>
            <person name="Li N."/>
            <person name="Ma C."/>
            <person name="Dong M.Q."/>
            <person name="Gao N."/>
        </authorList>
    </citation>
    <scope>STRUCTURE BY ELECTRON MICROSCOPY (3.09 ANGSTROMS)</scope>
    <scope>FUNCTION</scope>
    <scope>SUBUNIT</scope>
</reference>
<sequence>MALRYPMAVGLNKGHKVTKNVSKPRHSRRRGRLTKHTKFVRDMIREVCGFAPYERRAMELLKVSKDKRALKFIKKRVGTHIRAKRKREELSNVLAAMRKAAAKKD</sequence>
<name>RL36_HUMAN</name>
<dbReference type="EMBL" id="AB061833">
    <property type="protein sequence ID" value="BAB79471.1"/>
    <property type="molecule type" value="Genomic_DNA"/>
</dbReference>
<dbReference type="EMBL" id="AL050273">
    <property type="protein sequence ID" value="CAB43374.1"/>
    <property type="molecule type" value="mRNA"/>
</dbReference>
<dbReference type="EMBL" id="AF077043">
    <property type="protein sequence ID" value="AAD27776.1"/>
    <property type="molecule type" value="mRNA"/>
</dbReference>
<dbReference type="EMBL" id="CR533465">
    <property type="protein sequence ID" value="CAG38496.1"/>
    <property type="molecule type" value="mRNA"/>
</dbReference>
<dbReference type="EMBL" id="AK311990">
    <property type="protein sequence ID" value="BAG34928.1"/>
    <property type="molecule type" value="mRNA"/>
</dbReference>
<dbReference type="EMBL" id="CH471139">
    <property type="protein sequence ID" value="EAW69155.1"/>
    <property type="molecule type" value="Genomic_DNA"/>
</dbReference>
<dbReference type="EMBL" id="CH471139">
    <property type="protein sequence ID" value="EAW69158.1"/>
    <property type="molecule type" value="Genomic_DNA"/>
</dbReference>
<dbReference type="EMBL" id="BC003052">
    <property type="protein sequence ID" value="AAH03052.1"/>
    <property type="molecule type" value="mRNA"/>
</dbReference>
<dbReference type="EMBL" id="BC004971">
    <property type="protein sequence ID" value="AAH04971.1"/>
    <property type="molecule type" value="mRNA"/>
</dbReference>
<dbReference type="EMBL" id="BC091508">
    <property type="protein sequence ID" value="AAH91508.1"/>
    <property type="molecule type" value="mRNA"/>
</dbReference>
<dbReference type="CCDS" id="CCDS12147.1"/>
<dbReference type="PIR" id="T08720">
    <property type="entry name" value="T08720"/>
</dbReference>
<dbReference type="RefSeq" id="NP_056229.2">
    <property type="nucleotide sequence ID" value="NM_015414.3"/>
</dbReference>
<dbReference type="RefSeq" id="NP_378669.1">
    <property type="nucleotide sequence ID" value="NM_033643.3"/>
</dbReference>
<dbReference type="PDB" id="4UG0">
    <property type="method" value="EM"/>
    <property type="chains" value="Li=1-105"/>
</dbReference>
<dbReference type="PDB" id="4V6X">
    <property type="method" value="EM"/>
    <property type="resolution" value="5.00 A"/>
    <property type="chains" value="Ci=1-105"/>
</dbReference>
<dbReference type="PDB" id="5AJ0">
    <property type="method" value="EM"/>
    <property type="resolution" value="3.50 A"/>
    <property type="chains" value="Ai=1-105"/>
</dbReference>
<dbReference type="PDB" id="5LKS">
    <property type="method" value="EM"/>
    <property type="resolution" value="3.60 A"/>
    <property type="chains" value="Li=1-105"/>
</dbReference>
<dbReference type="PDB" id="5T2C">
    <property type="method" value="EM"/>
    <property type="resolution" value="3.60 A"/>
    <property type="chains" value="c=1-105"/>
</dbReference>
<dbReference type="PDB" id="6IP5">
    <property type="method" value="EM"/>
    <property type="resolution" value="3.90 A"/>
    <property type="chains" value="2c=1-105"/>
</dbReference>
<dbReference type="PDB" id="6IP6">
    <property type="method" value="EM"/>
    <property type="resolution" value="4.50 A"/>
    <property type="chains" value="2c=1-105"/>
</dbReference>
<dbReference type="PDB" id="6IP8">
    <property type="method" value="EM"/>
    <property type="resolution" value="3.90 A"/>
    <property type="chains" value="2c=1-105"/>
</dbReference>
<dbReference type="PDB" id="6LQM">
    <property type="method" value="EM"/>
    <property type="resolution" value="3.09 A"/>
    <property type="chains" value="K=1-105"/>
</dbReference>
<dbReference type="PDB" id="6LSR">
    <property type="method" value="EM"/>
    <property type="resolution" value="3.13 A"/>
    <property type="chains" value="K=1-105"/>
</dbReference>
<dbReference type="PDB" id="6LSS">
    <property type="method" value="EM"/>
    <property type="resolution" value="3.23 A"/>
    <property type="chains" value="K=1-105"/>
</dbReference>
<dbReference type="PDB" id="6LU8">
    <property type="method" value="EM"/>
    <property type="resolution" value="3.13 A"/>
    <property type="chains" value="K=1-105"/>
</dbReference>
<dbReference type="PDB" id="6OLE">
    <property type="method" value="EM"/>
    <property type="resolution" value="3.10 A"/>
    <property type="chains" value="j=5-101"/>
</dbReference>
<dbReference type="PDB" id="6OLF">
    <property type="method" value="EM"/>
    <property type="resolution" value="3.90 A"/>
    <property type="chains" value="j=5-101"/>
</dbReference>
<dbReference type="PDB" id="6OLG">
    <property type="method" value="EM"/>
    <property type="resolution" value="3.40 A"/>
    <property type="chains" value="Ai=5-101"/>
</dbReference>
<dbReference type="PDB" id="6OLI">
    <property type="method" value="EM"/>
    <property type="resolution" value="3.50 A"/>
    <property type="chains" value="j=5-101"/>
</dbReference>
<dbReference type="PDB" id="6OLZ">
    <property type="method" value="EM"/>
    <property type="resolution" value="3.90 A"/>
    <property type="chains" value="Ai=5-101"/>
</dbReference>
<dbReference type="PDB" id="6OM0">
    <property type="method" value="EM"/>
    <property type="resolution" value="3.10 A"/>
    <property type="chains" value="j=5-101"/>
</dbReference>
<dbReference type="PDB" id="6OM7">
    <property type="method" value="EM"/>
    <property type="resolution" value="3.70 A"/>
    <property type="chains" value="j=5-101"/>
</dbReference>
<dbReference type="PDB" id="6QZP">
    <property type="method" value="EM"/>
    <property type="resolution" value="2.90 A"/>
    <property type="chains" value="Li=2-103"/>
</dbReference>
<dbReference type="PDB" id="6W6L">
    <property type="method" value="EM"/>
    <property type="resolution" value="3.84 A"/>
    <property type="chains" value="j=1-105"/>
</dbReference>
<dbReference type="PDB" id="6XA1">
    <property type="method" value="EM"/>
    <property type="resolution" value="2.80 A"/>
    <property type="chains" value="Li=2-103"/>
</dbReference>
<dbReference type="PDB" id="6Y0G">
    <property type="method" value="EM"/>
    <property type="resolution" value="3.20 A"/>
    <property type="chains" value="Li=1-105"/>
</dbReference>
<dbReference type="PDB" id="6Y2L">
    <property type="method" value="EM"/>
    <property type="resolution" value="3.00 A"/>
    <property type="chains" value="Li=1-105"/>
</dbReference>
<dbReference type="PDB" id="6Y57">
    <property type="method" value="EM"/>
    <property type="resolution" value="3.50 A"/>
    <property type="chains" value="Li=1-105"/>
</dbReference>
<dbReference type="PDB" id="6Y6X">
    <property type="method" value="EM"/>
    <property type="resolution" value="2.80 A"/>
    <property type="chains" value="Li=2-103"/>
</dbReference>
<dbReference type="PDB" id="6Z6L">
    <property type="method" value="EM"/>
    <property type="resolution" value="3.00 A"/>
    <property type="chains" value="Li=1-105"/>
</dbReference>
<dbReference type="PDB" id="6Z6M">
    <property type="method" value="EM"/>
    <property type="resolution" value="3.10 A"/>
    <property type="chains" value="Li=1-105"/>
</dbReference>
<dbReference type="PDB" id="6Z6N">
    <property type="method" value="EM"/>
    <property type="resolution" value="2.90 A"/>
    <property type="chains" value="Li=1-105"/>
</dbReference>
<dbReference type="PDB" id="6ZM7">
    <property type="method" value="EM"/>
    <property type="resolution" value="2.70 A"/>
    <property type="chains" value="Li=1-105"/>
</dbReference>
<dbReference type="PDB" id="6ZME">
    <property type="method" value="EM"/>
    <property type="resolution" value="3.00 A"/>
    <property type="chains" value="Li=1-105"/>
</dbReference>
<dbReference type="PDB" id="6ZMI">
    <property type="method" value="EM"/>
    <property type="resolution" value="2.60 A"/>
    <property type="chains" value="Li=1-105"/>
</dbReference>
<dbReference type="PDB" id="6ZMO">
    <property type="method" value="EM"/>
    <property type="resolution" value="3.10 A"/>
    <property type="chains" value="Li=1-105"/>
</dbReference>
<dbReference type="PDB" id="7BHP">
    <property type="method" value="EM"/>
    <property type="resolution" value="3.30 A"/>
    <property type="chains" value="Li=1-105"/>
</dbReference>
<dbReference type="PDB" id="7F5S">
    <property type="method" value="EM"/>
    <property type="resolution" value="2.72 A"/>
    <property type="chains" value="Li=1-105"/>
</dbReference>
<dbReference type="PDB" id="7OW7">
    <property type="method" value="EM"/>
    <property type="resolution" value="2.20 A"/>
    <property type="chains" value="c=1-105"/>
</dbReference>
<dbReference type="PDB" id="7QGG">
    <property type="method" value="EM"/>
    <property type="resolution" value="2.86 A"/>
    <property type="chains" value="j=1-105"/>
</dbReference>
<dbReference type="PDB" id="7QVP">
    <property type="method" value="EM"/>
    <property type="resolution" value="3.00 A"/>
    <property type="chains" value="Li/Mi=1-105"/>
</dbReference>
<dbReference type="PDB" id="7XNX">
    <property type="method" value="EM"/>
    <property type="resolution" value="2.70 A"/>
    <property type="chains" value="Li=1-105"/>
</dbReference>
<dbReference type="PDB" id="7XNY">
    <property type="method" value="EM"/>
    <property type="resolution" value="2.50 A"/>
    <property type="chains" value="Li=1-105"/>
</dbReference>
<dbReference type="PDB" id="8A3D">
    <property type="method" value="EM"/>
    <property type="resolution" value="1.67 A"/>
    <property type="chains" value="c=1-105"/>
</dbReference>
<dbReference type="PDB" id="8FKP">
    <property type="method" value="EM"/>
    <property type="resolution" value="2.85 A"/>
    <property type="chains" value="LU=1-105"/>
</dbReference>
<dbReference type="PDB" id="8FKQ">
    <property type="method" value="EM"/>
    <property type="resolution" value="2.76 A"/>
    <property type="chains" value="LU=1-105"/>
</dbReference>
<dbReference type="PDB" id="8FKR">
    <property type="method" value="EM"/>
    <property type="resolution" value="2.89 A"/>
    <property type="chains" value="LU=1-105"/>
</dbReference>
<dbReference type="PDB" id="8FKS">
    <property type="method" value="EM"/>
    <property type="resolution" value="2.88 A"/>
    <property type="chains" value="LU=1-105"/>
</dbReference>
<dbReference type="PDB" id="8FKT">
    <property type="method" value="EM"/>
    <property type="resolution" value="2.81 A"/>
    <property type="chains" value="LU=1-105"/>
</dbReference>
<dbReference type="PDB" id="8FKU">
    <property type="method" value="EM"/>
    <property type="resolution" value="2.82 A"/>
    <property type="chains" value="LU=1-105"/>
</dbReference>
<dbReference type="PDB" id="8FKV">
    <property type="method" value="EM"/>
    <property type="resolution" value="2.47 A"/>
    <property type="chains" value="LU=1-105"/>
</dbReference>
<dbReference type="PDB" id="8FKW">
    <property type="method" value="EM"/>
    <property type="resolution" value="2.50 A"/>
    <property type="chains" value="LU=1-105"/>
</dbReference>
<dbReference type="PDB" id="8FKX">
    <property type="method" value="EM"/>
    <property type="resolution" value="2.59 A"/>
    <property type="chains" value="LU=1-105"/>
</dbReference>
<dbReference type="PDB" id="8FKY">
    <property type="method" value="EM"/>
    <property type="resolution" value="2.67 A"/>
    <property type="chains" value="LU=1-105"/>
</dbReference>
<dbReference type="PDB" id="8FKZ">
    <property type="method" value="EM"/>
    <property type="resolution" value="3.04 A"/>
    <property type="chains" value="LU=1-105"/>
</dbReference>
<dbReference type="PDB" id="8FL2">
    <property type="method" value="EM"/>
    <property type="resolution" value="2.67 A"/>
    <property type="chains" value="LU=1-105"/>
</dbReference>
<dbReference type="PDB" id="8FL3">
    <property type="method" value="EM"/>
    <property type="resolution" value="2.53 A"/>
    <property type="chains" value="LU=1-105"/>
</dbReference>
<dbReference type="PDB" id="8FL4">
    <property type="method" value="EM"/>
    <property type="resolution" value="2.89 A"/>
    <property type="chains" value="LU=1-105"/>
</dbReference>
<dbReference type="PDB" id="8FL6">
    <property type="method" value="EM"/>
    <property type="resolution" value="2.62 A"/>
    <property type="chains" value="LU=1-105"/>
</dbReference>
<dbReference type="PDB" id="8FL7">
    <property type="method" value="EM"/>
    <property type="resolution" value="2.55 A"/>
    <property type="chains" value="LU=1-105"/>
</dbReference>
<dbReference type="PDB" id="8FL9">
    <property type="method" value="EM"/>
    <property type="resolution" value="2.75 A"/>
    <property type="chains" value="LU=1-105"/>
</dbReference>
<dbReference type="PDB" id="8FLA">
    <property type="method" value="EM"/>
    <property type="resolution" value="2.63 A"/>
    <property type="chains" value="LU=1-105"/>
</dbReference>
<dbReference type="PDB" id="8FLB">
    <property type="method" value="EM"/>
    <property type="resolution" value="2.55 A"/>
    <property type="chains" value="LU=1-105"/>
</dbReference>
<dbReference type="PDB" id="8FLC">
    <property type="method" value="EM"/>
    <property type="resolution" value="2.76 A"/>
    <property type="chains" value="LU=1-105"/>
</dbReference>
<dbReference type="PDB" id="8FLD">
    <property type="method" value="EM"/>
    <property type="resolution" value="2.58 A"/>
    <property type="chains" value="LU=1-105"/>
</dbReference>
<dbReference type="PDB" id="8FLE">
    <property type="method" value="EM"/>
    <property type="resolution" value="2.48 A"/>
    <property type="chains" value="LU=1-105"/>
</dbReference>
<dbReference type="PDB" id="8FLF">
    <property type="method" value="EM"/>
    <property type="resolution" value="2.65 A"/>
    <property type="chains" value="LU=1-105"/>
</dbReference>
<dbReference type="PDB" id="8G5Y">
    <property type="method" value="EM"/>
    <property type="resolution" value="2.29 A"/>
    <property type="chains" value="Li=1-105"/>
</dbReference>
<dbReference type="PDB" id="8G5Z">
    <property type="method" value="EM"/>
    <property type="resolution" value="2.64 A"/>
    <property type="chains" value="Li=2-103"/>
</dbReference>
<dbReference type="PDB" id="8G60">
    <property type="method" value="EM"/>
    <property type="resolution" value="2.54 A"/>
    <property type="chains" value="Li=1-105"/>
</dbReference>
<dbReference type="PDB" id="8G61">
    <property type="method" value="EM"/>
    <property type="resolution" value="2.94 A"/>
    <property type="chains" value="Li=1-105"/>
</dbReference>
<dbReference type="PDB" id="8G6J">
    <property type="method" value="EM"/>
    <property type="resolution" value="2.80 A"/>
    <property type="chains" value="Li=1-105"/>
</dbReference>
<dbReference type="PDB" id="8GLP">
    <property type="method" value="EM"/>
    <property type="resolution" value="1.67 A"/>
    <property type="chains" value="Li=1-105"/>
</dbReference>
<dbReference type="PDB" id="8IDT">
    <property type="method" value="EM"/>
    <property type="resolution" value="2.80 A"/>
    <property type="chains" value="K=1-105"/>
</dbReference>
<dbReference type="PDB" id="8IDY">
    <property type="method" value="EM"/>
    <property type="resolution" value="3.00 A"/>
    <property type="chains" value="K=1-105"/>
</dbReference>
<dbReference type="PDB" id="8IE3">
    <property type="method" value="EM"/>
    <property type="resolution" value="3.30 A"/>
    <property type="chains" value="K=1-105"/>
</dbReference>
<dbReference type="PDB" id="8IFD">
    <property type="method" value="EM"/>
    <property type="resolution" value="2.59 A"/>
    <property type="chains" value="2c=1-105"/>
</dbReference>
<dbReference type="PDB" id="8IFE">
    <property type="method" value="EM"/>
    <property type="resolution" value="2.57 A"/>
    <property type="chains" value="2c=1-105"/>
</dbReference>
<dbReference type="PDB" id="8INE">
    <property type="method" value="EM"/>
    <property type="resolution" value="3.20 A"/>
    <property type="chains" value="K=1-105"/>
</dbReference>
<dbReference type="PDB" id="8INF">
    <property type="method" value="EM"/>
    <property type="resolution" value="3.00 A"/>
    <property type="chains" value="K=1-105"/>
</dbReference>
<dbReference type="PDB" id="8INK">
    <property type="method" value="EM"/>
    <property type="resolution" value="3.20 A"/>
    <property type="chains" value="K=1-105"/>
</dbReference>
<dbReference type="PDB" id="8IPD">
    <property type="method" value="EM"/>
    <property type="resolution" value="3.20 A"/>
    <property type="chains" value="K=1-105"/>
</dbReference>
<dbReference type="PDB" id="8IPX">
    <property type="method" value="EM"/>
    <property type="resolution" value="4.30 A"/>
    <property type="chains" value="K=1-105"/>
</dbReference>
<dbReference type="PDB" id="8IPY">
    <property type="method" value="EM"/>
    <property type="resolution" value="3.20 A"/>
    <property type="chains" value="K=1-105"/>
</dbReference>
<dbReference type="PDB" id="8IR1">
    <property type="method" value="EM"/>
    <property type="resolution" value="3.30 A"/>
    <property type="chains" value="K=1-105"/>
</dbReference>
<dbReference type="PDB" id="8IR3">
    <property type="method" value="EM"/>
    <property type="resolution" value="3.50 A"/>
    <property type="chains" value="K=1-105"/>
</dbReference>
<dbReference type="PDB" id="8JDJ">
    <property type="method" value="EM"/>
    <property type="resolution" value="2.50 A"/>
    <property type="chains" value="n=1-105"/>
</dbReference>
<dbReference type="PDB" id="8JDK">
    <property type="method" value="EM"/>
    <property type="resolution" value="2.26 A"/>
    <property type="chains" value="n=1-105"/>
</dbReference>
<dbReference type="PDB" id="8JDL">
    <property type="method" value="EM"/>
    <property type="resolution" value="2.42 A"/>
    <property type="chains" value="n=1-105"/>
</dbReference>
<dbReference type="PDB" id="8JDM">
    <property type="method" value="EM"/>
    <property type="resolution" value="2.67 A"/>
    <property type="chains" value="n=1-105"/>
</dbReference>
<dbReference type="PDB" id="8K2C">
    <property type="method" value="EM"/>
    <property type="resolution" value="2.40 A"/>
    <property type="chains" value="Li=1-105"/>
</dbReference>
<dbReference type="PDB" id="8OHD">
    <property type="method" value="EM"/>
    <property type="resolution" value="3.10 A"/>
    <property type="chains" value="Li=1-105"/>
</dbReference>
<dbReference type="PDB" id="8OJ0">
    <property type="method" value="EM"/>
    <property type="resolution" value="3.30 A"/>
    <property type="chains" value="Li=1-105"/>
</dbReference>
<dbReference type="PDB" id="8OJ5">
    <property type="method" value="EM"/>
    <property type="resolution" value="2.90 A"/>
    <property type="chains" value="Li=1-105"/>
</dbReference>
<dbReference type="PDB" id="8OJ8">
    <property type="method" value="EM"/>
    <property type="resolution" value="3.30 A"/>
    <property type="chains" value="Li=1-105"/>
</dbReference>
<dbReference type="PDB" id="8QFD">
    <property type="method" value="EM"/>
    <property type="resolution" value="2.20 A"/>
    <property type="chains" value="i=1-105"/>
</dbReference>
<dbReference type="PDB" id="8QOI">
    <property type="method" value="EM"/>
    <property type="resolution" value="1.90 A"/>
    <property type="chains" value="Li=1-105"/>
</dbReference>
<dbReference type="PDB" id="8QYX">
    <property type="method" value="EM"/>
    <property type="resolution" value="1.78 A"/>
    <property type="chains" value="c1=1-105"/>
</dbReference>
<dbReference type="PDB" id="8RL2">
    <property type="method" value="EM"/>
    <property type="resolution" value="2.84 A"/>
    <property type="chains" value="Li=1-105"/>
</dbReference>
<dbReference type="PDB" id="8UKB">
    <property type="method" value="EM"/>
    <property type="resolution" value="3.05 A"/>
    <property type="chains" value="Li=2-103"/>
</dbReference>
<dbReference type="PDB" id="8XSX">
    <property type="method" value="EM"/>
    <property type="resolution" value="2.40 A"/>
    <property type="chains" value="Li=1-105"/>
</dbReference>
<dbReference type="PDB" id="8XSY">
    <property type="method" value="EM"/>
    <property type="resolution" value="3.00 A"/>
    <property type="chains" value="Li=1-105"/>
</dbReference>
<dbReference type="PDB" id="8XSZ">
    <property type="method" value="EM"/>
    <property type="resolution" value="3.20 A"/>
    <property type="chains" value="Li=1-105"/>
</dbReference>
<dbReference type="PDB" id="8Y0W">
    <property type="method" value="EM"/>
    <property type="resolution" value="3.40 A"/>
    <property type="chains" value="Li=1-105"/>
</dbReference>
<dbReference type="PDB" id="8Y0X">
    <property type="method" value="EM"/>
    <property type="resolution" value="3.30 A"/>
    <property type="chains" value="Li=1-105"/>
</dbReference>
<dbReference type="PDB" id="8YOO">
    <property type="method" value="EM"/>
    <property type="resolution" value="2.00 A"/>
    <property type="chains" value="Li=1-105"/>
</dbReference>
<dbReference type="PDB" id="8YOP">
    <property type="method" value="EM"/>
    <property type="resolution" value="2.20 A"/>
    <property type="chains" value="Li=1-105"/>
</dbReference>
<dbReference type="PDB" id="9C3H">
    <property type="method" value="EM"/>
    <property type="resolution" value="2.00 A"/>
    <property type="chains" value="Li=1-105"/>
</dbReference>
<dbReference type="PDB" id="9G8M">
    <property type="method" value="EM"/>
    <property type="resolution" value="3.30 A"/>
    <property type="chains" value="Li=1-105"/>
</dbReference>
<dbReference type="PDB" id="9GMO">
    <property type="method" value="EM"/>
    <property type="resolution" value="2.59 A"/>
    <property type="chains" value="c=1-105"/>
</dbReference>
<dbReference type="PDBsum" id="4UG0"/>
<dbReference type="PDBsum" id="4V6X"/>
<dbReference type="PDBsum" id="5AJ0"/>
<dbReference type="PDBsum" id="5LKS"/>
<dbReference type="PDBsum" id="5T2C"/>
<dbReference type="PDBsum" id="6IP5"/>
<dbReference type="PDBsum" id="6IP6"/>
<dbReference type="PDBsum" id="6IP8"/>
<dbReference type="PDBsum" id="6LQM"/>
<dbReference type="PDBsum" id="6LSR"/>
<dbReference type="PDBsum" id="6LSS"/>
<dbReference type="PDBsum" id="6LU8"/>
<dbReference type="PDBsum" id="6OLE"/>
<dbReference type="PDBsum" id="6OLF"/>
<dbReference type="PDBsum" id="6OLG"/>
<dbReference type="PDBsum" id="6OLI"/>
<dbReference type="PDBsum" id="6OLZ"/>
<dbReference type="PDBsum" id="6OM0"/>
<dbReference type="PDBsum" id="6OM7"/>
<dbReference type="PDBsum" id="6QZP"/>
<dbReference type="PDBsum" id="6W6L"/>
<dbReference type="PDBsum" id="6XA1"/>
<dbReference type="PDBsum" id="6Y0G"/>
<dbReference type="PDBsum" id="6Y2L"/>
<dbReference type="PDBsum" id="6Y57"/>
<dbReference type="PDBsum" id="6Y6X"/>
<dbReference type="PDBsum" id="6Z6L"/>
<dbReference type="PDBsum" id="6Z6M"/>
<dbReference type="PDBsum" id="6Z6N"/>
<dbReference type="PDBsum" id="6ZM7"/>
<dbReference type="PDBsum" id="6ZME"/>
<dbReference type="PDBsum" id="6ZMI"/>
<dbReference type="PDBsum" id="6ZMO"/>
<dbReference type="PDBsum" id="7BHP"/>
<dbReference type="PDBsum" id="7F5S"/>
<dbReference type="PDBsum" id="7OW7"/>
<dbReference type="PDBsum" id="7QGG"/>
<dbReference type="PDBsum" id="7QVP"/>
<dbReference type="PDBsum" id="7XNX"/>
<dbReference type="PDBsum" id="7XNY"/>
<dbReference type="PDBsum" id="8A3D"/>
<dbReference type="PDBsum" id="8FKP"/>
<dbReference type="PDBsum" id="8FKQ"/>
<dbReference type="PDBsum" id="8FKR"/>
<dbReference type="PDBsum" id="8FKS"/>
<dbReference type="PDBsum" id="8FKT"/>
<dbReference type="PDBsum" id="8FKU"/>
<dbReference type="PDBsum" id="8FKV"/>
<dbReference type="PDBsum" id="8FKW"/>
<dbReference type="PDBsum" id="8FKX"/>
<dbReference type="PDBsum" id="8FKY"/>
<dbReference type="PDBsum" id="8FKZ"/>
<dbReference type="PDBsum" id="8FL2"/>
<dbReference type="PDBsum" id="8FL3"/>
<dbReference type="PDBsum" id="8FL4"/>
<dbReference type="PDBsum" id="8FL6"/>
<dbReference type="PDBsum" id="8FL7"/>
<dbReference type="PDBsum" id="8FL9"/>
<dbReference type="PDBsum" id="8FLA"/>
<dbReference type="PDBsum" id="8FLB"/>
<dbReference type="PDBsum" id="8FLC"/>
<dbReference type="PDBsum" id="8FLD"/>
<dbReference type="PDBsum" id="8FLE"/>
<dbReference type="PDBsum" id="8FLF"/>
<dbReference type="PDBsum" id="8G5Y"/>
<dbReference type="PDBsum" id="8G5Z"/>
<dbReference type="PDBsum" id="8G60"/>
<dbReference type="PDBsum" id="8G61"/>
<dbReference type="PDBsum" id="8G6J"/>
<dbReference type="PDBsum" id="8GLP"/>
<dbReference type="PDBsum" id="8IDT"/>
<dbReference type="PDBsum" id="8IDY"/>
<dbReference type="PDBsum" id="8IE3"/>
<dbReference type="PDBsum" id="8IFD"/>
<dbReference type="PDBsum" id="8IFE"/>
<dbReference type="PDBsum" id="8INE"/>
<dbReference type="PDBsum" id="8INF"/>
<dbReference type="PDBsum" id="8INK"/>
<dbReference type="PDBsum" id="8IPD"/>
<dbReference type="PDBsum" id="8IPX"/>
<dbReference type="PDBsum" id="8IPY"/>
<dbReference type="PDBsum" id="8IR1"/>
<dbReference type="PDBsum" id="8IR3"/>
<dbReference type="PDBsum" id="8JDJ"/>
<dbReference type="PDBsum" id="8JDK"/>
<dbReference type="PDBsum" id="8JDL"/>
<dbReference type="PDBsum" id="8JDM"/>
<dbReference type="PDBsum" id="8K2C"/>
<dbReference type="PDBsum" id="8OHD"/>
<dbReference type="PDBsum" id="8OJ0"/>
<dbReference type="PDBsum" id="8OJ5"/>
<dbReference type="PDBsum" id="8OJ8"/>
<dbReference type="PDBsum" id="8QFD"/>
<dbReference type="PDBsum" id="8QOI"/>
<dbReference type="PDBsum" id="8QYX"/>
<dbReference type="PDBsum" id="8RL2"/>
<dbReference type="PDBsum" id="8UKB"/>
<dbReference type="PDBsum" id="8XSX"/>
<dbReference type="PDBsum" id="8XSY"/>
<dbReference type="PDBsum" id="8XSZ"/>
<dbReference type="PDBsum" id="8Y0W"/>
<dbReference type="PDBsum" id="8Y0X"/>
<dbReference type="PDBsum" id="8YOO"/>
<dbReference type="PDBsum" id="8YOP"/>
<dbReference type="PDBsum" id="9C3H"/>
<dbReference type="PDBsum" id="9G8M"/>
<dbReference type="PDBsum" id="9GMO"/>
<dbReference type="EMDB" id="EMD-0948"/>
<dbReference type="EMDB" id="EMD-0963"/>
<dbReference type="EMDB" id="EMD-0964"/>
<dbReference type="EMDB" id="EMD-0978"/>
<dbReference type="EMDB" id="EMD-10668"/>
<dbReference type="EMDB" id="EMD-10674"/>
<dbReference type="EMDB" id="EMD-10690"/>
<dbReference type="EMDB" id="EMD-10709"/>
<dbReference type="EMDB" id="EMD-11098"/>
<dbReference type="EMDB" id="EMD-11099"/>
<dbReference type="EMDB" id="EMD-11100"/>
<dbReference type="EMDB" id="EMD-11288"/>
<dbReference type="EMDB" id="EMD-11289"/>
<dbReference type="EMDB" id="EMD-11292"/>
<dbReference type="EMDB" id="EMD-11299"/>
<dbReference type="EMDB" id="EMD-12189"/>
<dbReference type="EMDB" id="EMD-13094"/>
<dbReference type="EMDB" id="EMD-13954"/>
<dbReference type="EMDB" id="EMD-14181"/>
<dbReference type="EMDB" id="EMD-15113"/>
<dbReference type="EMDB" id="EMD-16880"/>
<dbReference type="EMDB" id="EMD-16902"/>
<dbReference type="EMDB" id="EMD-16905"/>
<dbReference type="EMDB" id="EMD-16908"/>
<dbReference type="EMDB" id="EMD-18382"/>
<dbReference type="EMDB" id="EMD-18539"/>
<dbReference type="EMDB" id="EMD-18765"/>
<dbReference type="EMDB" id="EMD-19330"/>
<dbReference type="EMDB" id="EMD-29252"/>
<dbReference type="EMDB" id="EMD-29253"/>
<dbReference type="EMDB" id="EMD-29254"/>
<dbReference type="EMDB" id="EMD-29255"/>
<dbReference type="EMDB" id="EMD-29256"/>
<dbReference type="EMDB" id="EMD-29257"/>
<dbReference type="EMDB" id="EMD-29258"/>
<dbReference type="EMDB" id="EMD-29259"/>
<dbReference type="EMDB" id="EMD-29260"/>
<dbReference type="EMDB" id="EMD-29261"/>
<dbReference type="EMDB" id="EMD-29262"/>
<dbReference type="EMDB" id="EMD-29265"/>
<dbReference type="EMDB" id="EMD-29266"/>
<dbReference type="EMDB" id="EMD-29267"/>
<dbReference type="EMDB" id="EMD-29268"/>
<dbReference type="EMDB" id="EMD-29269"/>
<dbReference type="EMDB" id="EMD-29271"/>
<dbReference type="EMDB" id="EMD-29272"/>
<dbReference type="EMDB" id="EMD-29273"/>
<dbReference type="EMDB" id="EMD-29274"/>
<dbReference type="EMDB" id="EMD-29275"/>
<dbReference type="EMDB" id="EMD-29276"/>
<dbReference type="EMDB" id="EMD-29277"/>
<dbReference type="EMDB" id="EMD-29757"/>
<dbReference type="EMDB" id="EMD-29758"/>
<dbReference type="EMDB" id="EMD-29759"/>
<dbReference type="EMDB" id="EMD-29760"/>
<dbReference type="EMDB" id="EMD-29771"/>
<dbReference type="EMDB" id="EMD-31465"/>
<dbReference type="EMDB" id="EMD-33329"/>
<dbReference type="EMDB" id="EMD-33330"/>
<dbReference type="EMDB" id="EMD-35370"/>
<dbReference type="EMDB" id="EMD-35371"/>
<dbReference type="EMDB" id="EMD-35375"/>
<dbReference type="EMDB" id="EMD-35413"/>
<dbReference type="EMDB" id="EMD-35414"/>
<dbReference type="EMDB" id="EMD-35596"/>
<dbReference type="EMDB" id="EMD-35597"/>
<dbReference type="EMDB" id="EMD-35599"/>
<dbReference type="EMDB" id="EMD-35639"/>
<dbReference type="EMDB" id="EMD-35649"/>
<dbReference type="EMDB" id="EMD-35651"/>
<dbReference type="EMDB" id="EMD-35672"/>
<dbReference type="EMDB" id="EMD-35673"/>
<dbReference type="EMDB" id="EMD-36178"/>
<dbReference type="EMDB" id="EMD-36179"/>
<dbReference type="EMDB" id="EMD-36180"/>
<dbReference type="EMDB" id="EMD-36181"/>
<dbReference type="EMDB" id="EMD-36838"/>
<dbReference type="EMDB" id="EMD-38629"/>
<dbReference type="EMDB" id="EMD-38630"/>
<dbReference type="EMDB" id="EMD-38631"/>
<dbReference type="EMDB" id="EMD-3883"/>
<dbReference type="EMDB" id="EMD-39455"/>
<dbReference type="EMDB" id="EMD-39456"/>
<dbReference type="EMDB" id="EMD-40205"/>
<dbReference type="EMDB" id="EMD-4070"/>
<dbReference type="EMDB" id="EMD-42351"/>
<dbReference type="EMDB" id="EMD-45170"/>
<dbReference type="EMDB" id="EMD-51132"/>
<dbReference type="EMDB" id="EMD-51452"/>
<dbReference type="EMDB" id="EMD-9701"/>
<dbReference type="EMDB" id="EMD-9702"/>
<dbReference type="EMDB" id="EMD-9703"/>
<dbReference type="SMR" id="Q9Y3U8"/>
<dbReference type="BioGRID" id="117388">
    <property type="interactions" value="549"/>
</dbReference>
<dbReference type="ComplexPortal" id="CPX-5183">
    <property type="entry name" value="60S cytosolic large ribosomal subunit"/>
</dbReference>
<dbReference type="ComplexPortal" id="CPX-7664">
    <property type="entry name" value="60S cytosolic large ribosomal subunit, testis-specific variant"/>
</dbReference>
<dbReference type="ComplexPortal" id="CPX-7665">
    <property type="entry name" value="60S cytosolic large ribosomal subunit, striated muscle variant"/>
</dbReference>
<dbReference type="CORUM" id="Q9Y3U8"/>
<dbReference type="FunCoup" id="Q9Y3U8">
    <property type="interactions" value="1852"/>
</dbReference>
<dbReference type="IntAct" id="Q9Y3U8">
    <property type="interactions" value="309"/>
</dbReference>
<dbReference type="MINT" id="Q9Y3U8"/>
<dbReference type="STRING" id="9606.ENSP00000464342"/>
<dbReference type="GlyGen" id="Q9Y3U8">
    <property type="glycosylation" value="1 site, 1 O-linked glycan (1 site)"/>
</dbReference>
<dbReference type="iPTMnet" id="Q9Y3U8"/>
<dbReference type="MetOSite" id="Q9Y3U8"/>
<dbReference type="PhosphoSitePlus" id="Q9Y3U8"/>
<dbReference type="SwissPalm" id="Q9Y3U8"/>
<dbReference type="BioMuta" id="RPL36"/>
<dbReference type="DMDM" id="7388073"/>
<dbReference type="jPOST" id="Q9Y3U8"/>
<dbReference type="MassIVE" id="Q9Y3U8"/>
<dbReference type="PaxDb" id="9606-ENSP00000464342"/>
<dbReference type="PeptideAtlas" id="Q9Y3U8"/>
<dbReference type="ProteomicsDB" id="86079"/>
<dbReference type="Pumba" id="Q9Y3U8"/>
<dbReference type="TopDownProteomics" id="Q9Y3U8"/>
<dbReference type="Antibodypedia" id="23940">
    <property type="antibodies" value="175 antibodies from 28 providers"/>
</dbReference>
<dbReference type="DNASU" id="25873"/>
<dbReference type="Ensembl" id="ENST00000347512.8">
    <property type="protein sequence ID" value="ENSP00000252543.3"/>
    <property type="gene ID" value="ENSG00000130255.13"/>
</dbReference>
<dbReference type="Ensembl" id="ENST00000394580.2">
    <property type="protein sequence ID" value="ENSP00000378081.2"/>
    <property type="gene ID" value="ENSG00000130255.13"/>
</dbReference>
<dbReference type="Ensembl" id="ENST00000577222.5">
    <property type="protein sequence ID" value="ENSP00000464342.1"/>
    <property type="gene ID" value="ENSG00000130255.13"/>
</dbReference>
<dbReference type="Ensembl" id="ENST00000579649.5">
    <property type="protein sequence ID" value="ENSP00000462609.1"/>
    <property type="gene ID" value="ENSG00000130255.13"/>
</dbReference>
<dbReference type="GeneID" id="25873"/>
<dbReference type="KEGG" id="hsa:25873"/>
<dbReference type="MANE-Select" id="ENST00000347512.8">
    <property type="protein sequence ID" value="ENSP00000252543.3"/>
    <property type="RefSeq nucleotide sequence ID" value="NM_033643.3"/>
    <property type="RefSeq protein sequence ID" value="NP_378669.1"/>
</dbReference>
<dbReference type="UCSC" id="uc002mcv.4">
    <property type="organism name" value="human"/>
</dbReference>
<dbReference type="AGR" id="HGNC:13631"/>
<dbReference type="CTD" id="25873"/>
<dbReference type="DisGeNET" id="25873"/>
<dbReference type="GeneCards" id="RPL36"/>
<dbReference type="HGNC" id="HGNC:13631">
    <property type="gene designation" value="RPL36"/>
</dbReference>
<dbReference type="HPA" id="ENSG00000130255">
    <property type="expression patterns" value="Low tissue specificity"/>
</dbReference>
<dbReference type="MalaCards" id="RPL36"/>
<dbReference type="MIM" id="617893">
    <property type="type" value="gene"/>
</dbReference>
<dbReference type="neXtProt" id="NX_Q9Y3U8"/>
<dbReference type="OpenTargets" id="ENSG00000130255"/>
<dbReference type="PharmGKB" id="PA34730"/>
<dbReference type="VEuPathDB" id="HostDB:ENSG00000130255"/>
<dbReference type="eggNOG" id="KOG3452">
    <property type="taxonomic scope" value="Eukaryota"/>
</dbReference>
<dbReference type="GeneTree" id="ENSGT00390000011943"/>
<dbReference type="HOGENOM" id="CLU_140672_2_0_1"/>
<dbReference type="InParanoid" id="Q9Y3U8"/>
<dbReference type="OMA" id="NKGHKTE"/>
<dbReference type="OrthoDB" id="9616667at2759"/>
<dbReference type="PAN-GO" id="Q9Y3U8">
    <property type="GO annotations" value="3 GO annotations based on evolutionary models"/>
</dbReference>
<dbReference type="PhylomeDB" id="Q9Y3U8"/>
<dbReference type="TreeFam" id="TF314463"/>
<dbReference type="PathwayCommons" id="Q9Y3U8"/>
<dbReference type="Reactome" id="R-HSA-156827">
    <property type="pathway name" value="L13a-mediated translational silencing of Ceruloplasmin expression"/>
</dbReference>
<dbReference type="Reactome" id="R-HSA-156902">
    <property type="pathway name" value="Peptide chain elongation"/>
</dbReference>
<dbReference type="Reactome" id="R-HSA-1799339">
    <property type="pathway name" value="SRP-dependent cotranslational protein targeting to membrane"/>
</dbReference>
<dbReference type="Reactome" id="R-HSA-192823">
    <property type="pathway name" value="Viral mRNA Translation"/>
</dbReference>
<dbReference type="Reactome" id="R-HSA-2408557">
    <property type="pathway name" value="Selenocysteine synthesis"/>
</dbReference>
<dbReference type="Reactome" id="R-HSA-6791226">
    <property type="pathway name" value="Major pathway of rRNA processing in the nucleolus and cytosol"/>
</dbReference>
<dbReference type="Reactome" id="R-HSA-72689">
    <property type="pathway name" value="Formation of a pool of free 40S subunits"/>
</dbReference>
<dbReference type="Reactome" id="R-HSA-72706">
    <property type="pathway name" value="GTP hydrolysis and joining of the 60S ribosomal subunit"/>
</dbReference>
<dbReference type="Reactome" id="R-HSA-72764">
    <property type="pathway name" value="Eukaryotic Translation Termination"/>
</dbReference>
<dbReference type="Reactome" id="R-HSA-9010553">
    <property type="pathway name" value="Regulation of expression of SLITs and ROBOs"/>
</dbReference>
<dbReference type="Reactome" id="R-HSA-9633012">
    <property type="pathway name" value="Response of EIF2AK4 (GCN2) to amino acid deficiency"/>
</dbReference>
<dbReference type="Reactome" id="R-HSA-975956">
    <property type="pathway name" value="Nonsense Mediated Decay (NMD) independent of the Exon Junction Complex (EJC)"/>
</dbReference>
<dbReference type="Reactome" id="R-HSA-975957">
    <property type="pathway name" value="Nonsense Mediated Decay (NMD) enhanced by the Exon Junction Complex (EJC)"/>
</dbReference>
<dbReference type="SignaLink" id="Q9Y3U8"/>
<dbReference type="SIGNOR" id="Q9Y3U8"/>
<dbReference type="BioGRID-ORCS" id="25873">
    <property type="hits" value="845 hits in 1138 CRISPR screens"/>
</dbReference>
<dbReference type="CD-CODE" id="91857CE7">
    <property type="entry name" value="Nucleolus"/>
</dbReference>
<dbReference type="CD-CODE" id="FB4E32DD">
    <property type="entry name" value="Presynaptic clusters and postsynaptic densities"/>
</dbReference>
<dbReference type="ChiTaRS" id="RPL36">
    <property type="organism name" value="human"/>
</dbReference>
<dbReference type="GeneWiki" id="RPL36"/>
<dbReference type="GenomeRNAi" id="25873"/>
<dbReference type="Pharos" id="Q9Y3U8">
    <property type="development level" value="Tbio"/>
</dbReference>
<dbReference type="PRO" id="PR:Q9Y3U8"/>
<dbReference type="Proteomes" id="UP000005640">
    <property type="component" value="Chromosome 19"/>
</dbReference>
<dbReference type="RNAct" id="Q9Y3U8">
    <property type="molecule type" value="protein"/>
</dbReference>
<dbReference type="Bgee" id="ENSG00000130255">
    <property type="expression patterns" value="Expressed in ganglionic eminence and 202 other cell types or tissues"/>
</dbReference>
<dbReference type="ExpressionAtlas" id="Q9Y3U8">
    <property type="expression patterns" value="baseline and differential"/>
</dbReference>
<dbReference type="GO" id="GO:0005737">
    <property type="term" value="C:cytoplasm"/>
    <property type="evidence" value="ECO:0007005"/>
    <property type="project" value="UniProtKB"/>
</dbReference>
<dbReference type="GO" id="GO:0005829">
    <property type="term" value="C:cytosol"/>
    <property type="evidence" value="ECO:0000314"/>
    <property type="project" value="HPA"/>
</dbReference>
<dbReference type="GO" id="GO:0022625">
    <property type="term" value="C:cytosolic large ribosomal subunit"/>
    <property type="evidence" value="ECO:0000314"/>
    <property type="project" value="UniProtKB"/>
</dbReference>
<dbReference type="GO" id="GO:0022626">
    <property type="term" value="C:cytosolic ribosome"/>
    <property type="evidence" value="ECO:0000314"/>
    <property type="project" value="FlyBase"/>
</dbReference>
<dbReference type="GO" id="GO:0016020">
    <property type="term" value="C:membrane"/>
    <property type="evidence" value="ECO:0007005"/>
    <property type="project" value="UniProtKB"/>
</dbReference>
<dbReference type="GO" id="GO:0005730">
    <property type="term" value="C:nucleolus"/>
    <property type="evidence" value="ECO:0000314"/>
    <property type="project" value="LIFEdb"/>
</dbReference>
<dbReference type="GO" id="GO:0045202">
    <property type="term" value="C:synapse"/>
    <property type="evidence" value="ECO:0007669"/>
    <property type="project" value="Ensembl"/>
</dbReference>
<dbReference type="GO" id="GO:0003723">
    <property type="term" value="F:RNA binding"/>
    <property type="evidence" value="ECO:0007005"/>
    <property type="project" value="UniProtKB"/>
</dbReference>
<dbReference type="GO" id="GO:0003735">
    <property type="term" value="F:structural constituent of ribosome"/>
    <property type="evidence" value="ECO:0000314"/>
    <property type="project" value="UniProtKB"/>
</dbReference>
<dbReference type="GO" id="GO:0002181">
    <property type="term" value="P:cytoplasmic translation"/>
    <property type="evidence" value="ECO:0000314"/>
    <property type="project" value="UniProtKB"/>
</dbReference>
<dbReference type="GO" id="GO:0006412">
    <property type="term" value="P:translation"/>
    <property type="evidence" value="ECO:0000303"/>
    <property type="project" value="UniProtKB"/>
</dbReference>
<dbReference type="FunFam" id="1.10.10.1760:FF:000002">
    <property type="entry name" value="60S ribosomal protein L36"/>
    <property type="match status" value="1"/>
</dbReference>
<dbReference type="Gene3D" id="1.10.10.1760">
    <property type="entry name" value="60S ribosomal protein L36"/>
    <property type="match status" value="1"/>
</dbReference>
<dbReference type="InterPro" id="IPR000509">
    <property type="entry name" value="Ribosomal_eL36"/>
</dbReference>
<dbReference type="InterPro" id="IPR038097">
    <property type="entry name" value="Ribosomal_eL36_sf"/>
</dbReference>
<dbReference type="PANTHER" id="PTHR10114">
    <property type="entry name" value="60S RIBOSOMAL PROTEIN L36"/>
    <property type="match status" value="1"/>
</dbReference>
<dbReference type="Pfam" id="PF01158">
    <property type="entry name" value="Ribosomal_L36e"/>
    <property type="match status" value="1"/>
</dbReference>
<dbReference type="PROSITE" id="PS01190">
    <property type="entry name" value="RIBOSOMAL_L36E"/>
    <property type="match status" value="1"/>
</dbReference>
<comment type="function">
    <text evidence="3 4 5 6 10">Component of the large ribosomal subunit (PubMed:12962325, PubMed:23636399, PubMed:25901680, PubMed:25957688, PubMed:32669547). The ribosome is a large ribonucleoprotein complex responsible for the synthesis of proteins in the cell (PubMed:12962325, PubMed:23636399, PubMed:25901680, PubMed:25957688, PubMed:32669547).</text>
</comment>
<comment type="subunit">
    <text evidence="3 4 5 6 10">Component of the large ribosomal subunit (PubMed:12962325, PubMed:23636399, PubMed:25901680, PubMed:25957688, PubMed:32669547).</text>
</comment>
<comment type="interaction">
    <interactant intactId="EBI-1057689">
        <id>Q9Y3U8</id>
    </interactant>
    <interactant intactId="EBI-744088">
        <id>Q8IY81</id>
        <label>FTSJ3</label>
    </interactant>
    <organismsDiffer>false</organismsDiffer>
    <experiments>2</experiments>
</comment>
<comment type="interaction">
    <interactant intactId="EBI-1057689">
        <id>Q9Y3U8</id>
    </interactant>
    <interactant intactId="EBI-354172">
        <id>P62424</id>
        <label>RPL7A</label>
    </interactant>
    <organismsDiffer>false</organismsDiffer>
    <experiments>2</experiments>
</comment>
<comment type="subcellular location">
    <subcellularLocation>
        <location evidence="5">Cytoplasm</location>
        <location evidence="5">Cytosol</location>
    </subcellularLocation>
    <subcellularLocation>
        <location evidence="11 12">Cytoplasm</location>
    </subcellularLocation>
    <text evidence="1 5">Detected on cytosolic polysomes (PubMed:25957688).</text>
</comment>
<comment type="similarity">
    <text evidence="9">Belongs to the eukaryotic ribosomal protein eL36 family.</text>
</comment>
<accession>Q9Y3U8</accession>
<accession>B2R4Y1</accession>
<accession>D6W634</accession>
<accession>Q6FIG1</accession>
<accession>Q9UQF6</accession>
<feature type="initiator methionine" description="Removed" evidence="2 7">
    <location>
        <position position="1"/>
    </location>
</feature>
<feature type="chain" id="PRO_0000195007" description="Large ribosomal subunit protein eL36">
    <location>
        <begin position="2"/>
        <end position="105"/>
    </location>
</feature>
<feature type="modified residue" description="N6-acetyllysine" evidence="19">
    <location>
        <position position="62"/>
    </location>
</feature>
<feature type="sequence variant" id="VAR_051804" description="In dbSNP:rs11556110.">
    <original>K</original>
    <variation>E</variation>
    <location>
        <position position="67"/>
    </location>
</feature>
<feature type="sequence conflict" description="In Ref. 3; AAD27776." evidence="9" ref="3">
    <original>R</original>
    <variation>H</variation>
    <location>
        <position position="29"/>
    </location>
</feature>
<gene>
    <name type="primary">RPL36</name>
</gene>
<evidence type="ECO:0000250" key="1">
    <source>
        <dbReference type="UniProtKB" id="Q2YGT9"/>
    </source>
</evidence>
<evidence type="ECO:0000269" key="2">
    <source>
    </source>
</evidence>
<evidence type="ECO:0000269" key="3">
    <source>
    </source>
</evidence>
<evidence type="ECO:0000269" key="4">
    <source>
    </source>
</evidence>
<evidence type="ECO:0000269" key="5">
    <source>
    </source>
</evidence>
<evidence type="ECO:0000269" key="6">
    <source>
    </source>
</evidence>
<evidence type="ECO:0000269" key="7">
    <source ref="9"/>
</evidence>
<evidence type="ECO:0000303" key="8">
    <source>
    </source>
</evidence>
<evidence type="ECO:0000305" key="9"/>
<evidence type="ECO:0000305" key="10">
    <source>
    </source>
</evidence>
<evidence type="ECO:0000305" key="11">
    <source>
    </source>
</evidence>
<evidence type="ECO:0000305" key="12">
    <source>
    </source>
</evidence>
<evidence type="ECO:0007744" key="13">
    <source>
        <dbReference type="PDB" id="4UG0"/>
    </source>
</evidence>
<evidence type="ECO:0007744" key="14">
    <source>
        <dbReference type="PDB" id="5AJ0"/>
    </source>
</evidence>
<evidence type="ECO:0007744" key="15">
    <source>
        <dbReference type="PDB" id="6LQM"/>
    </source>
</evidence>
<evidence type="ECO:0007744" key="16">
    <source>
        <dbReference type="PDB" id="6LSR"/>
    </source>
</evidence>
<evidence type="ECO:0007744" key="17">
    <source>
        <dbReference type="PDB" id="6LSS"/>
    </source>
</evidence>
<evidence type="ECO:0007744" key="18">
    <source>
        <dbReference type="PDB" id="6LU8"/>
    </source>
</evidence>
<evidence type="ECO:0007744" key="19">
    <source>
    </source>
</evidence>
<organism>
    <name type="scientific">Homo sapiens</name>
    <name type="common">Human</name>
    <dbReference type="NCBI Taxonomy" id="9606"/>
    <lineage>
        <taxon>Eukaryota</taxon>
        <taxon>Metazoa</taxon>
        <taxon>Chordata</taxon>
        <taxon>Craniata</taxon>
        <taxon>Vertebrata</taxon>
        <taxon>Euteleostomi</taxon>
        <taxon>Mammalia</taxon>
        <taxon>Eutheria</taxon>
        <taxon>Euarchontoglires</taxon>
        <taxon>Primates</taxon>
        <taxon>Haplorrhini</taxon>
        <taxon>Catarrhini</taxon>
        <taxon>Hominidae</taxon>
        <taxon>Homo</taxon>
    </lineage>
</organism>